<evidence type="ECO:0000255" key="1">
    <source>
        <dbReference type="HAMAP-Rule" id="MF_01287"/>
    </source>
</evidence>
<evidence type="ECO:0000305" key="2"/>
<dbReference type="EC" id="1.3.-.-" evidence="1"/>
<dbReference type="EMBL" id="AE000666">
    <property type="protein sequence ID" value="AAB86190.1"/>
    <property type="status" value="ALT_INIT"/>
    <property type="molecule type" value="Genomic_DNA"/>
</dbReference>
<dbReference type="PIR" id="H69096">
    <property type="entry name" value="H69096"/>
</dbReference>
<dbReference type="RefSeq" id="WP_048061129.1">
    <property type="nucleotide sequence ID" value="NC_000916.1"/>
</dbReference>
<dbReference type="SMR" id="O27753"/>
<dbReference type="FunCoup" id="O27753">
    <property type="interactions" value="55"/>
</dbReference>
<dbReference type="STRING" id="187420.MTH_1718"/>
<dbReference type="PaxDb" id="187420-MTH_1718"/>
<dbReference type="DNASU" id="1470803"/>
<dbReference type="EnsemblBacteria" id="AAB86190">
    <property type="protein sequence ID" value="AAB86190"/>
    <property type="gene ID" value="MTH_1718"/>
</dbReference>
<dbReference type="GeneID" id="1470803"/>
<dbReference type="KEGG" id="mth:MTH_1718"/>
<dbReference type="PATRIC" id="fig|187420.15.peg.1679"/>
<dbReference type="HOGENOM" id="CLU_024648_0_0_2"/>
<dbReference type="InParanoid" id="O27753"/>
<dbReference type="UniPathway" id="UPA00940"/>
<dbReference type="Proteomes" id="UP000005223">
    <property type="component" value="Chromosome"/>
</dbReference>
<dbReference type="GO" id="GO:0016020">
    <property type="term" value="C:membrane"/>
    <property type="evidence" value="ECO:0007669"/>
    <property type="project" value="GOC"/>
</dbReference>
<dbReference type="GO" id="GO:0050660">
    <property type="term" value="F:flavin adenine dinucleotide binding"/>
    <property type="evidence" value="ECO:0007669"/>
    <property type="project" value="UniProtKB-UniRule"/>
</dbReference>
<dbReference type="GO" id="GO:0045550">
    <property type="term" value="F:geranylgeranyl reductase activity"/>
    <property type="evidence" value="ECO:0007669"/>
    <property type="project" value="InterPro"/>
</dbReference>
<dbReference type="GO" id="GO:0016628">
    <property type="term" value="F:oxidoreductase activity, acting on the CH-CH group of donors, NAD or NADP as acceptor"/>
    <property type="evidence" value="ECO:0007669"/>
    <property type="project" value="InterPro"/>
</dbReference>
<dbReference type="GO" id="GO:0046474">
    <property type="term" value="P:glycerophospholipid biosynthetic process"/>
    <property type="evidence" value="ECO:0007669"/>
    <property type="project" value="UniProtKB-UniRule"/>
</dbReference>
<dbReference type="GO" id="GO:0046467">
    <property type="term" value="P:membrane lipid biosynthetic process"/>
    <property type="evidence" value="ECO:0007669"/>
    <property type="project" value="InterPro"/>
</dbReference>
<dbReference type="Gene3D" id="3.30.9.10">
    <property type="entry name" value="D-Amino Acid Oxidase, subunit A, domain 2"/>
    <property type="match status" value="1"/>
</dbReference>
<dbReference type="Gene3D" id="3.50.50.60">
    <property type="entry name" value="FAD/NAD(P)-binding domain"/>
    <property type="match status" value="1"/>
</dbReference>
<dbReference type="HAMAP" id="MF_01287">
    <property type="entry name" value="DGGGPL_reductase"/>
    <property type="match status" value="1"/>
</dbReference>
<dbReference type="InterPro" id="IPR023590">
    <property type="entry name" value="DGGGPL_reductase"/>
</dbReference>
<dbReference type="InterPro" id="IPR036188">
    <property type="entry name" value="FAD/NAD-bd_sf"/>
</dbReference>
<dbReference type="InterPro" id="IPR011777">
    <property type="entry name" value="Geranylgeranyl_Rdtase_fam"/>
</dbReference>
<dbReference type="InterPro" id="IPR050407">
    <property type="entry name" value="Geranylgeranyl_reductase"/>
</dbReference>
<dbReference type="InterPro" id="IPR054715">
    <property type="entry name" value="GGR_cat"/>
</dbReference>
<dbReference type="NCBIfam" id="TIGR02032">
    <property type="entry name" value="GG-red-SF"/>
    <property type="match status" value="1"/>
</dbReference>
<dbReference type="PANTHER" id="PTHR42685:SF18">
    <property type="entry name" value="DIGERANYLGERANYLGLYCEROPHOSPHOLIPID REDUCTASE"/>
    <property type="match status" value="1"/>
</dbReference>
<dbReference type="PANTHER" id="PTHR42685">
    <property type="entry name" value="GERANYLGERANYL DIPHOSPHATE REDUCTASE"/>
    <property type="match status" value="1"/>
</dbReference>
<dbReference type="Pfam" id="PF12831">
    <property type="entry name" value="FAD_oxidored"/>
    <property type="match status" value="1"/>
</dbReference>
<dbReference type="Pfam" id="PF22578">
    <property type="entry name" value="GGR_cat"/>
    <property type="match status" value="1"/>
</dbReference>
<dbReference type="PRINTS" id="PR00420">
    <property type="entry name" value="RNGMNOXGNASE"/>
</dbReference>
<dbReference type="SUPFAM" id="SSF51905">
    <property type="entry name" value="FAD/NAD(P)-binding domain"/>
    <property type="match status" value="1"/>
</dbReference>
<proteinExistence type="inferred from homology"/>
<organism>
    <name type="scientific">Methanothermobacter thermautotrophicus (strain ATCC 29096 / DSM 1053 / JCM 10044 / NBRC 100330 / Delta H)</name>
    <name type="common">Methanobacterium thermoautotrophicum</name>
    <dbReference type="NCBI Taxonomy" id="187420"/>
    <lineage>
        <taxon>Archaea</taxon>
        <taxon>Methanobacteriati</taxon>
        <taxon>Methanobacteriota</taxon>
        <taxon>Methanomada group</taxon>
        <taxon>Methanobacteria</taxon>
        <taxon>Methanobacteriales</taxon>
        <taxon>Methanobacteriaceae</taxon>
        <taxon>Methanothermobacter</taxon>
    </lineage>
</organism>
<reference key="1">
    <citation type="journal article" date="1997" name="J. Bacteriol.">
        <title>Complete genome sequence of Methanobacterium thermoautotrophicum deltaH: functional analysis and comparative genomics.</title>
        <authorList>
            <person name="Smith D.R."/>
            <person name="Doucette-Stamm L.A."/>
            <person name="Deloughery C."/>
            <person name="Lee H.-M."/>
            <person name="Dubois J."/>
            <person name="Aldredge T."/>
            <person name="Bashirzadeh R."/>
            <person name="Blakely D."/>
            <person name="Cook R."/>
            <person name="Gilbert K."/>
            <person name="Harrison D."/>
            <person name="Hoang L."/>
            <person name="Keagle P."/>
            <person name="Lumm W."/>
            <person name="Pothier B."/>
            <person name="Qiu D."/>
            <person name="Spadafora R."/>
            <person name="Vicare R."/>
            <person name="Wang Y."/>
            <person name="Wierzbowski J."/>
            <person name="Gibson R."/>
            <person name="Jiwani N."/>
            <person name="Caruso A."/>
            <person name="Bush D."/>
            <person name="Safer H."/>
            <person name="Patwell D."/>
            <person name="Prabhakar S."/>
            <person name="McDougall S."/>
            <person name="Shimer G."/>
            <person name="Goyal A."/>
            <person name="Pietrovski S."/>
            <person name="Church G.M."/>
            <person name="Daniels C.J."/>
            <person name="Mao J.-I."/>
            <person name="Rice P."/>
            <person name="Noelling J."/>
            <person name="Reeve J.N."/>
        </authorList>
    </citation>
    <scope>NUCLEOTIDE SEQUENCE [LARGE SCALE GENOMIC DNA]</scope>
    <source>
        <strain>ATCC 29096 / DSM 1053 / JCM 10044 / NBRC 100330 / Delta H</strain>
    </source>
</reference>
<gene>
    <name type="ordered locus">MTH_1718</name>
</gene>
<sequence>MKYDVVVIGGRVAGSTAAYHAARLGLSVLLLERNPEIGTPVQCAGGVSDSFFKSTGLKPLPEFTCTRIRAAAVNGPLGARIVTENPVVRGYILERKSLDKYLALRAAEAGADVLTMSIAGDLIFREGSVSGVVFRGPDGVQEVECGMVIAADGVQSSIARKAGLETGFRPADLCSCVQYEVAGVDVDPETMEFYFGSRFAPSGYLWVFPKGEGRANVGLGIRRKSCSERGPLSYLNRFMEERGFKRIEFNAGAVPVCGPIERTFTDGLLVVGDAAGQVDPLTGGGIHLAAECAKIAGEVAAEAIESGRVDGRFLSRYEMRWRKKIGKNLERSLKFRKILDGLGDEELDALLRSLEGKDLSSISKISLLRILKDYPSMLRILRDIL</sequence>
<feature type="chain" id="PRO_0000351471" description="Digeranylgeranylglycerophospholipid reductase 2">
    <location>
        <begin position="1"/>
        <end position="385"/>
    </location>
</feature>
<feature type="binding site" evidence="1">
    <location>
        <position position="13"/>
    </location>
    <ligand>
        <name>FAD</name>
        <dbReference type="ChEBI" id="CHEBI:57692"/>
    </ligand>
</feature>
<feature type="binding site" evidence="1">
    <location>
        <position position="32"/>
    </location>
    <ligand>
        <name>FAD</name>
        <dbReference type="ChEBI" id="CHEBI:57692"/>
    </ligand>
</feature>
<feature type="binding site" evidence="1">
    <location>
        <position position="43"/>
    </location>
    <ligand>
        <name>FAD</name>
        <dbReference type="ChEBI" id="CHEBI:57692"/>
    </ligand>
</feature>
<feature type="binding site" evidence="1">
    <location>
        <position position="44"/>
    </location>
    <ligand>
        <name>FAD</name>
        <dbReference type="ChEBI" id="CHEBI:57692"/>
    </ligand>
</feature>
<feature type="binding site" evidence="1">
    <location>
        <position position="46"/>
    </location>
    <ligand>
        <name>FAD</name>
        <dbReference type="ChEBI" id="CHEBI:57692"/>
    </ligand>
</feature>
<feature type="binding site" evidence="1">
    <location>
        <position position="95"/>
    </location>
    <ligand>
        <name>FAD</name>
        <dbReference type="ChEBI" id="CHEBI:57692"/>
    </ligand>
</feature>
<feature type="binding site" evidence="1">
    <location>
        <position position="119"/>
    </location>
    <ligand>
        <name>FAD</name>
        <dbReference type="ChEBI" id="CHEBI:57692"/>
    </ligand>
</feature>
<feature type="binding site" evidence="1">
    <location>
        <position position="273"/>
    </location>
    <ligand>
        <name>FAD</name>
        <dbReference type="ChEBI" id="CHEBI:57692"/>
    </ligand>
</feature>
<feature type="binding site" evidence="1">
    <location>
        <position position="285"/>
    </location>
    <ligand>
        <name>FAD</name>
        <dbReference type="ChEBI" id="CHEBI:57692"/>
    </ligand>
</feature>
<feature type="binding site" evidence="1">
    <location>
        <position position="286"/>
    </location>
    <ligand>
        <name>FAD</name>
        <dbReference type="ChEBI" id="CHEBI:57692"/>
    </ligand>
</feature>
<name>GGR2_METTH</name>
<accession>O27753</accession>
<protein>
    <recommendedName>
        <fullName evidence="1">Digeranylgeranylglycerophospholipid reductase 2</fullName>
        <shortName evidence="1">DGGGPL reductase 2</shortName>
        <ecNumber evidence="1">1.3.-.-</ecNumber>
    </recommendedName>
    <alternativeName>
        <fullName evidence="1">2,3-bis-O-geranylgeranylglyceryl phosphate reductase 2</fullName>
    </alternativeName>
    <alternativeName>
        <fullName evidence="1">Geranylgeranyl reductase 2</fullName>
        <shortName evidence="1">GGR 2</shortName>
    </alternativeName>
</protein>
<keyword id="KW-0274">FAD</keyword>
<keyword id="KW-0285">Flavoprotein</keyword>
<keyword id="KW-0444">Lipid biosynthesis</keyword>
<keyword id="KW-0443">Lipid metabolism</keyword>
<keyword id="KW-0560">Oxidoreductase</keyword>
<keyword id="KW-0594">Phospholipid biosynthesis</keyword>
<keyword id="KW-1208">Phospholipid metabolism</keyword>
<keyword id="KW-1185">Reference proteome</keyword>
<comment type="function">
    <text evidence="1">Is involved in the reduction of 2,3-digeranylgeranylglycerophospholipids (unsaturated archaeols) into 2,3-diphytanylglycerophospholipids (saturated archaeols) in the biosynthesis of archaeal membrane lipids. Catalyzes the formation of archaetidic acid (2,3-di-O-phytanyl-sn-glyceryl phosphate) from 2,3-di-O-geranylgeranylglyceryl phosphate (DGGGP) via the hydrogenation of each double bond of the isoprenoid chains. Is also probably able to reduce double bonds of geranyl groups in CDP-2,3-bis-O-(geranylgeranyl)-sn-glycerol and archaetidylserine, thus acting at various stages in the biosynthesis of archaeal membrane lipids.</text>
</comment>
<comment type="catalytic activity">
    <reaction evidence="1">
        <text>a 2,3-bis-O-phytanyl-sn-glycerol 1-phospholipid + 8 A = a 2,3-bis-O-(geranylgeranyl)-sn-glycerol 1-phospholipid + 8 AH2</text>
        <dbReference type="Rhea" id="RHEA:64376"/>
        <dbReference type="ChEBI" id="CHEBI:13193"/>
        <dbReference type="ChEBI" id="CHEBI:17499"/>
        <dbReference type="ChEBI" id="CHEBI:138139"/>
        <dbReference type="ChEBI" id="CHEBI:138140"/>
    </reaction>
    <physiologicalReaction direction="right-to-left" evidence="1">
        <dbReference type="Rhea" id="RHEA:64378"/>
    </physiologicalReaction>
</comment>
<comment type="catalytic activity">
    <reaction evidence="1">
        <text>2,3-bis-O-(phytanyl)-sn-glycerol 1-phosphate + 8 A = 2,3-bis-O-(geranylgeranyl)-sn-glycerol 1-phosphate + 8 AH2</text>
        <dbReference type="Rhea" id="RHEA:64368"/>
        <dbReference type="ChEBI" id="CHEBI:13193"/>
        <dbReference type="ChEBI" id="CHEBI:17499"/>
        <dbReference type="ChEBI" id="CHEBI:58837"/>
        <dbReference type="ChEBI" id="CHEBI:73125"/>
    </reaction>
    <physiologicalReaction direction="right-to-left" evidence="1">
        <dbReference type="Rhea" id="RHEA:64370"/>
    </physiologicalReaction>
</comment>
<comment type="catalytic activity">
    <reaction evidence="1">
        <text>CDP-2,3-bis-O-(geranylgeranyl)-sn-glycerol + 8 AH2 = CDP-2,3-bis-O-(phytanyl)-sn-glycerol + 8 A</text>
        <dbReference type="Rhea" id="RHEA:84207"/>
        <dbReference type="ChEBI" id="CHEBI:13193"/>
        <dbReference type="ChEBI" id="CHEBI:17499"/>
        <dbReference type="ChEBI" id="CHEBI:58838"/>
        <dbReference type="ChEBI" id="CHEBI:74004"/>
    </reaction>
    <physiologicalReaction direction="left-to-right" evidence="1">
        <dbReference type="Rhea" id="RHEA:84208"/>
    </physiologicalReaction>
</comment>
<comment type="catalytic activity">
    <reaction evidence="1">
        <text>archaetidylserine + 8 AH2 = 2,3-bis-O-phytanyl-sn-glycero-3-phospho-L-serine + 8 A</text>
        <dbReference type="Rhea" id="RHEA:84215"/>
        <dbReference type="ChEBI" id="CHEBI:13193"/>
        <dbReference type="ChEBI" id="CHEBI:17499"/>
        <dbReference type="ChEBI" id="CHEBI:71517"/>
        <dbReference type="ChEBI" id="CHEBI:74853"/>
    </reaction>
    <physiologicalReaction direction="left-to-right" evidence="1">
        <dbReference type="Rhea" id="RHEA:84216"/>
    </physiologicalReaction>
</comment>
<comment type="cofactor">
    <cofactor evidence="1">
        <name>FAD</name>
        <dbReference type="ChEBI" id="CHEBI:57692"/>
    </cofactor>
    <text evidence="1">Binds 1 FAD per subunit.</text>
</comment>
<comment type="pathway">
    <text evidence="1">Membrane lipid metabolism; glycerophospholipid metabolism.</text>
</comment>
<comment type="miscellaneous">
    <text evidence="1">Reduction reaction proceeds via syn addition of hydrogen for double bonds.</text>
</comment>
<comment type="similarity">
    <text evidence="1">Belongs to the geranylgeranyl reductase family. DGGGPL reductase subfamily.</text>
</comment>
<comment type="sequence caution" evidence="2">
    <conflict type="erroneous initiation">
        <sequence resource="EMBL-CDS" id="AAB86190"/>
    </conflict>
    <text>Truncated N-terminus.</text>
</comment>